<sequence length="302" mass="33580">MRIVFCGTSSFAVPSLELLASEFEIALVITQPDKPAGRGQKLTPPPVKQKALELNLNISQPEKISFLKEELLNIKPDIMIVVAYGQIIPKSMLEIPTFKSLNLHGSVLPKYRGAAPIQRALMQGEKETGNTVILMSSKMDEGDILSVESIPIEQEDNYEKLSNKLSIKGAKLLKDTILSWVSGSIKPIPQNHQEATYAMPILKEELRICFKTSAFSIHNKIRGVYPNAYGVSGDRNIKILKTNIVEKDLNLKPGELFYDGKSLFVGTGDLPLEILEIMSLKGKRVSGKEFAMGYLNQVKKFY</sequence>
<accession>B4U5Z8</accession>
<gene>
    <name evidence="1" type="primary">fmt</name>
    <name type="ordered locus">HY04AAS1_1505</name>
</gene>
<evidence type="ECO:0000255" key="1">
    <source>
        <dbReference type="HAMAP-Rule" id="MF_00182"/>
    </source>
</evidence>
<keyword id="KW-0648">Protein biosynthesis</keyword>
<keyword id="KW-0808">Transferase</keyword>
<organism>
    <name type="scientific">Hydrogenobaculum sp. (strain Y04AAS1)</name>
    <dbReference type="NCBI Taxonomy" id="380749"/>
    <lineage>
        <taxon>Bacteria</taxon>
        <taxon>Pseudomonadati</taxon>
        <taxon>Aquificota</taxon>
        <taxon>Aquificia</taxon>
        <taxon>Aquificales</taxon>
        <taxon>Aquificaceae</taxon>
        <taxon>Hydrogenobaculum</taxon>
    </lineage>
</organism>
<comment type="function">
    <text evidence="1">Attaches a formyl group to the free amino group of methionyl-tRNA(fMet). The formyl group appears to play a dual role in the initiator identity of N-formylmethionyl-tRNA by promoting its recognition by IF2 and preventing the misappropriation of this tRNA by the elongation apparatus.</text>
</comment>
<comment type="catalytic activity">
    <reaction evidence="1">
        <text>L-methionyl-tRNA(fMet) + (6R)-10-formyltetrahydrofolate = N-formyl-L-methionyl-tRNA(fMet) + (6S)-5,6,7,8-tetrahydrofolate + H(+)</text>
        <dbReference type="Rhea" id="RHEA:24380"/>
        <dbReference type="Rhea" id="RHEA-COMP:9952"/>
        <dbReference type="Rhea" id="RHEA-COMP:9953"/>
        <dbReference type="ChEBI" id="CHEBI:15378"/>
        <dbReference type="ChEBI" id="CHEBI:57453"/>
        <dbReference type="ChEBI" id="CHEBI:78530"/>
        <dbReference type="ChEBI" id="CHEBI:78844"/>
        <dbReference type="ChEBI" id="CHEBI:195366"/>
        <dbReference type="EC" id="2.1.2.9"/>
    </reaction>
</comment>
<comment type="similarity">
    <text evidence="1">Belongs to the Fmt family.</text>
</comment>
<reference key="1">
    <citation type="journal article" date="2009" name="J. Bacteriol.">
        <title>Complete and draft genome sequences of six members of the Aquificales.</title>
        <authorList>
            <person name="Reysenbach A.-L."/>
            <person name="Hamamura N."/>
            <person name="Podar M."/>
            <person name="Griffiths E."/>
            <person name="Ferreira S."/>
            <person name="Hochstein R."/>
            <person name="Heidelberg J."/>
            <person name="Johnson J."/>
            <person name="Mead D."/>
            <person name="Pohorille A."/>
            <person name="Sarmiento M."/>
            <person name="Schweighofer K."/>
            <person name="Seshadri R."/>
            <person name="Voytek M.A."/>
        </authorList>
    </citation>
    <scope>NUCLEOTIDE SEQUENCE [LARGE SCALE GENOMIC DNA]</scope>
    <source>
        <strain>Y04AAS1</strain>
    </source>
</reference>
<proteinExistence type="inferred from homology"/>
<name>FMT_HYDS0</name>
<dbReference type="EC" id="2.1.2.9" evidence="1"/>
<dbReference type="EMBL" id="CP001130">
    <property type="protein sequence ID" value="ACG58188.1"/>
    <property type="molecule type" value="Genomic_DNA"/>
</dbReference>
<dbReference type="RefSeq" id="WP_012514544.1">
    <property type="nucleotide sequence ID" value="NC_011126.1"/>
</dbReference>
<dbReference type="SMR" id="B4U5Z8"/>
<dbReference type="STRING" id="380749.HY04AAS1_1505"/>
<dbReference type="KEGG" id="hya:HY04AAS1_1505"/>
<dbReference type="eggNOG" id="COG0223">
    <property type="taxonomic scope" value="Bacteria"/>
</dbReference>
<dbReference type="HOGENOM" id="CLU_033347_1_1_0"/>
<dbReference type="OrthoDB" id="9802815at2"/>
<dbReference type="GO" id="GO:0005829">
    <property type="term" value="C:cytosol"/>
    <property type="evidence" value="ECO:0007669"/>
    <property type="project" value="TreeGrafter"/>
</dbReference>
<dbReference type="GO" id="GO:0004479">
    <property type="term" value="F:methionyl-tRNA formyltransferase activity"/>
    <property type="evidence" value="ECO:0007669"/>
    <property type="project" value="UniProtKB-UniRule"/>
</dbReference>
<dbReference type="CDD" id="cd08646">
    <property type="entry name" value="FMT_core_Met-tRNA-FMT_N"/>
    <property type="match status" value="1"/>
</dbReference>
<dbReference type="CDD" id="cd08704">
    <property type="entry name" value="Met_tRNA_FMT_C"/>
    <property type="match status" value="1"/>
</dbReference>
<dbReference type="Gene3D" id="3.40.50.12230">
    <property type="match status" value="1"/>
</dbReference>
<dbReference type="HAMAP" id="MF_00182">
    <property type="entry name" value="Formyl_trans"/>
    <property type="match status" value="1"/>
</dbReference>
<dbReference type="InterPro" id="IPR005794">
    <property type="entry name" value="Fmt"/>
</dbReference>
<dbReference type="InterPro" id="IPR005793">
    <property type="entry name" value="Formyl_trans_C"/>
</dbReference>
<dbReference type="InterPro" id="IPR002376">
    <property type="entry name" value="Formyl_transf_N"/>
</dbReference>
<dbReference type="InterPro" id="IPR036477">
    <property type="entry name" value="Formyl_transf_N_sf"/>
</dbReference>
<dbReference type="InterPro" id="IPR011034">
    <property type="entry name" value="Formyl_transferase-like_C_sf"/>
</dbReference>
<dbReference type="InterPro" id="IPR044135">
    <property type="entry name" value="Met-tRNA-FMT_C"/>
</dbReference>
<dbReference type="InterPro" id="IPR041711">
    <property type="entry name" value="Met-tRNA-FMT_N"/>
</dbReference>
<dbReference type="NCBIfam" id="TIGR00460">
    <property type="entry name" value="fmt"/>
    <property type="match status" value="1"/>
</dbReference>
<dbReference type="PANTHER" id="PTHR11138">
    <property type="entry name" value="METHIONYL-TRNA FORMYLTRANSFERASE"/>
    <property type="match status" value="1"/>
</dbReference>
<dbReference type="PANTHER" id="PTHR11138:SF5">
    <property type="entry name" value="METHIONYL-TRNA FORMYLTRANSFERASE, MITOCHONDRIAL"/>
    <property type="match status" value="1"/>
</dbReference>
<dbReference type="Pfam" id="PF02911">
    <property type="entry name" value="Formyl_trans_C"/>
    <property type="match status" value="1"/>
</dbReference>
<dbReference type="Pfam" id="PF00551">
    <property type="entry name" value="Formyl_trans_N"/>
    <property type="match status" value="1"/>
</dbReference>
<dbReference type="SUPFAM" id="SSF50486">
    <property type="entry name" value="FMT C-terminal domain-like"/>
    <property type="match status" value="1"/>
</dbReference>
<dbReference type="SUPFAM" id="SSF53328">
    <property type="entry name" value="Formyltransferase"/>
    <property type="match status" value="1"/>
</dbReference>
<protein>
    <recommendedName>
        <fullName evidence="1">Methionyl-tRNA formyltransferase</fullName>
        <ecNumber evidence="1">2.1.2.9</ecNumber>
    </recommendedName>
</protein>
<feature type="chain" id="PRO_1000098411" description="Methionyl-tRNA formyltransferase">
    <location>
        <begin position="1"/>
        <end position="302"/>
    </location>
</feature>
<feature type="binding site" evidence="1">
    <location>
        <begin position="106"/>
        <end position="109"/>
    </location>
    <ligand>
        <name>(6S)-5,6,7,8-tetrahydrofolate</name>
        <dbReference type="ChEBI" id="CHEBI:57453"/>
    </ligand>
</feature>